<feature type="chain" id="PRO_1000205241" description="UPF0145 protein Lm4b_00206">
    <location>
        <begin position="1"/>
        <end position="110"/>
    </location>
</feature>
<accession>C1KYE1</accession>
<comment type="similarity">
    <text evidence="1">Belongs to the UPF0145 family.</text>
</comment>
<dbReference type="EMBL" id="FM242711">
    <property type="protein sequence ID" value="CAS03996.1"/>
    <property type="molecule type" value="Genomic_DNA"/>
</dbReference>
<dbReference type="RefSeq" id="WP_003725735.1">
    <property type="nucleotide sequence ID" value="NC_012488.1"/>
</dbReference>
<dbReference type="SMR" id="C1KYE1"/>
<dbReference type="KEGG" id="lmc:Lm4b_00206"/>
<dbReference type="HOGENOM" id="CLU_117144_3_1_9"/>
<dbReference type="Gene3D" id="3.30.110.70">
    <property type="entry name" value="Hypothetical protein apc22750. Chain B"/>
    <property type="match status" value="1"/>
</dbReference>
<dbReference type="HAMAP" id="MF_00338">
    <property type="entry name" value="UPF0145"/>
    <property type="match status" value="1"/>
</dbReference>
<dbReference type="InterPro" id="IPR035439">
    <property type="entry name" value="UPF0145_dom_sf"/>
</dbReference>
<dbReference type="InterPro" id="IPR002765">
    <property type="entry name" value="UPF0145_YbjQ-like"/>
</dbReference>
<dbReference type="NCBIfam" id="NF002224">
    <property type="entry name" value="PRK01119.1"/>
    <property type="match status" value="1"/>
</dbReference>
<dbReference type="PANTHER" id="PTHR34068">
    <property type="entry name" value="UPF0145 PROTEIN YBJQ"/>
    <property type="match status" value="1"/>
</dbReference>
<dbReference type="PANTHER" id="PTHR34068:SF1">
    <property type="entry name" value="UPF0145 PROTEIN YBJQ"/>
    <property type="match status" value="1"/>
</dbReference>
<dbReference type="Pfam" id="PF01906">
    <property type="entry name" value="YbjQ_1"/>
    <property type="match status" value="1"/>
</dbReference>
<dbReference type="SUPFAM" id="SSF117782">
    <property type="entry name" value="YbjQ-like"/>
    <property type="match status" value="1"/>
</dbReference>
<evidence type="ECO:0000255" key="1">
    <source>
        <dbReference type="HAMAP-Rule" id="MF_00338"/>
    </source>
</evidence>
<gene>
    <name type="ordered locus">Lm4b_00206</name>
</gene>
<organism>
    <name type="scientific">Listeria monocytogenes serotype 4b (strain CLIP80459)</name>
    <dbReference type="NCBI Taxonomy" id="568819"/>
    <lineage>
        <taxon>Bacteria</taxon>
        <taxon>Bacillati</taxon>
        <taxon>Bacillota</taxon>
        <taxon>Bacilli</taxon>
        <taxon>Bacillales</taxon>
        <taxon>Listeriaceae</taxon>
        <taxon>Listeria</taxon>
    </lineage>
</organism>
<proteinExistence type="inferred from homology"/>
<protein>
    <recommendedName>
        <fullName evidence="1">UPF0145 protein Lm4b_00206</fullName>
    </recommendedName>
</protein>
<name>Y206_LISMC</name>
<reference key="1">
    <citation type="journal article" date="2012" name="BMC Genomics">
        <title>Comparative genomics and transcriptomics of lineages I, II, and III strains of Listeria monocytogenes.</title>
        <authorList>
            <person name="Hain T."/>
            <person name="Ghai R."/>
            <person name="Billion A."/>
            <person name="Kuenne C.T."/>
            <person name="Steinweg C."/>
            <person name="Izar B."/>
            <person name="Mohamed W."/>
            <person name="Mraheil M."/>
            <person name="Domann E."/>
            <person name="Schaffrath S."/>
            <person name="Karst U."/>
            <person name="Goesmann A."/>
            <person name="Oehm S."/>
            <person name="Puhler A."/>
            <person name="Merkl R."/>
            <person name="Vorwerk S."/>
            <person name="Glaser P."/>
            <person name="Garrido P."/>
            <person name="Rusniok C."/>
            <person name="Buchrieser C."/>
            <person name="Goebel W."/>
            <person name="Chakraborty T."/>
        </authorList>
    </citation>
    <scope>NUCLEOTIDE SEQUENCE [LARGE SCALE GENOMIC DNA]</scope>
    <source>
        <strain>CLIP80459</strain>
    </source>
</reference>
<sequence length="110" mass="11992">MIVTTSPNIEGKQIIEYKKIVFGEVITGVNFMKDIGAGLRNFFGGRSQGYEDELINAREEAIREMEQRAKDIGANAVIGVDIDYEVLGADNGMLMVTASGTAVVIEAQDY</sequence>